<sequence>MAHTVKIYDNCIGCTQCVRACPLDVLEMVPWDGCKAGQMASAPRTEDCVGCKRCETACPTDFLSIRVYLGGETTRSMGLAY</sequence>
<geneLocation type="chloroplast"/>
<organism>
    <name type="scientific">Cyanidioschyzon merolae (strain NIES-3377 / 10D)</name>
    <name type="common">Unicellular red alga</name>
    <dbReference type="NCBI Taxonomy" id="280699"/>
    <lineage>
        <taxon>Eukaryota</taxon>
        <taxon>Rhodophyta</taxon>
        <taxon>Bangiophyceae</taxon>
        <taxon>Cyanidiales</taxon>
        <taxon>Cyanidiaceae</taxon>
        <taxon>Cyanidioschyzon</taxon>
    </lineage>
</organism>
<protein>
    <recommendedName>
        <fullName evidence="2">Photosystem I iron-sulfur center</fullName>
        <ecNumber evidence="2">1.97.1.12</ecNumber>
    </recommendedName>
    <alternativeName>
        <fullName evidence="2">9 kDa polypeptide</fullName>
    </alternativeName>
    <alternativeName>
        <fullName evidence="2">PSI-C</fullName>
    </alternativeName>
    <alternativeName>
        <fullName evidence="2">Photosystem I subunit VII</fullName>
    </alternativeName>
    <alternativeName>
        <fullName evidence="2">PsaC</fullName>
    </alternativeName>
</protein>
<feature type="initiator methionine" description="Removed" evidence="1">
    <location>
        <position position="1"/>
    </location>
</feature>
<feature type="chain" id="PRO_0000061978" description="Photosystem I iron-sulfur center">
    <location>
        <begin position="2"/>
        <end position="81"/>
    </location>
</feature>
<feature type="domain" description="4Fe-4S ferredoxin-type 1" evidence="2">
    <location>
        <begin position="2"/>
        <end position="31"/>
    </location>
</feature>
<feature type="domain" description="4Fe-4S ferredoxin-type 2" evidence="2">
    <location>
        <begin position="39"/>
        <end position="68"/>
    </location>
</feature>
<feature type="binding site" evidence="2">
    <location>
        <position position="11"/>
    </location>
    <ligand>
        <name>[4Fe-4S] cluster</name>
        <dbReference type="ChEBI" id="CHEBI:49883"/>
        <label>1</label>
    </ligand>
</feature>
<feature type="binding site" evidence="2">
    <location>
        <position position="14"/>
    </location>
    <ligand>
        <name>[4Fe-4S] cluster</name>
        <dbReference type="ChEBI" id="CHEBI:49883"/>
        <label>1</label>
    </ligand>
</feature>
<feature type="binding site" evidence="2">
    <location>
        <position position="17"/>
    </location>
    <ligand>
        <name>[4Fe-4S] cluster</name>
        <dbReference type="ChEBI" id="CHEBI:49883"/>
        <label>1</label>
    </ligand>
</feature>
<feature type="binding site" evidence="2">
    <location>
        <position position="21"/>
    </location>
    <ligand>
        <name>[4Fe-4S] cluster</name>
        <dbReference type="ChEBI" id="CHEBI:49883"/>
        <label>2</label>
    </ligand>
</feature>
<feature type="binding site" evidence="2">
    <location>
        <position position="48"/>
    </location>
    <ligand>
        <name>[4Fe-4S] cluster</name>
        <dbReference type="ChEBI" id="CHEBI:49883"/>
        <label>2</label>
    </ligand>
</feature>
<feature type="binding site" evidence="2">
    <location>
        <position position="51"/>
    </location>
    <ligand>
        <name>[4Fe-4S] cluster</name>
        <dbReference type="ChEBI" id="CHEBI:49883"/>
        <label>2</label>
    </ligand>
</feature>
<feature type="binding site" evidence="2">
    <location>
        <position position="54"/>
    </location>
    <ligand>
        <name>[4Fe-4S] cluster</name>
        <dbReference type="ChEBI" id="CHEBI:49883"/>
        <label>2</label>
    </ligand>
</feature>
<feature type="binding site" evidence="2">
    <location>
        <position position="58"/>
    </location>
    <ligand>
        <name>[4Fe-4S] cluster</name>
        <dbReference type="ChEBI" id="CHEBI:49883"/>
        <label>1</label>
    </ligand>
</feature>
<feature type="strand" evidence="3">
    <location>
        <begin position="4"/>
        <end position="8"/>
    </location>
</feature>
<feature type="helix" evidence="3">
    <location>
        <begin position="16"/>
        <end position="20"/>
    </location>
</feature>
<feature type="strand" evidence="3">
    <location>
        <begin position="27"/>
        <end position="30"/>
    </location>
</feature>
<feature type="strand" evidence="3">
    <location>
        <begin position="32"/>
        <end position="34"/>
    </location>
</feature>
<feature type="strand" evidence="3">
    <location>
        <begin position="38"/>
        <end position="41"/>
    </location>
</feature>
<feature type="helix" evidence="3">
    <location>
        <begin position="45"/>
        <end position="47"/>
    </location>
</feature>
<feature type="helix" evidence="3">
    <location>
        <begin position="53"/>
        <end position="57"/>
    </location>
</feature>
<feature type="strand" evidence="3">
    <location>
        <begin position="60"/>
        <end position="62"/>
    </location>
</feature>
<feature type="strand" evidence="3">
    <location>
        <begin position="64"/>
        <end position="68"/>
    </location>
</feature>
<feature type="turn" evidence="3">
    <location>
        <begin position="74"/>
        <end position="78"/>
    </location>
</feature>
<gene>
    <name evidence="2" type="primary">psaC</name>
</gene>
<evidence type="ECO:0000250" key="1"/>
<evidence type="ECO:0000255" key="2">
    <source>
        <dbReference type="HAMAP-Rule" id="MF_01303"/>
    </source>
</evidence>
<evidence type="ECO:0007829" key="3">
    <source>
        <dbReference type="PDB" id="7BLZ"/>
    </source>
</evidence>
<name>PSAC_CYAM1</name>
<keyword id="KW-0002">3D-structure</keyword>
<keyword id="KW-0004">4Fe-4S</keyword>
<keyword id="KW-0150">Chloroplast</keyword>
<keyword id="KW-0249">Electron transport</keyword>
<keyword id="KW-0408">Iron</keyword>
<keyword id="KW-0411">Iron-sulfur</keyword>
<keyword id="KW-0472">Membrane</keyword>
<keyword id="KW-0479">Metal-binding</keyword>
<keyword id="KW-0560">Oxidoreductase</keyword>
<keyword id="KW-0602">Photosynthesis</keyword>
<keyword id="KW-0603">Photosystem I</keyword>
<keyword id="KW-0934">Plastid</keyword>
<keyword id="KW-1185">Reference proteome</keyword>
<keyword id="KW-0677">Repeat</keyword>
<keyword id="KW-0793">Thylakoid</keyword>
<keyword id="KW-0813">Transport</keyword>
<proteinExistence type="evidence at protein level"/>
<comment type="function">
    <text>Apoprotein for the two 4Fe-4S centers FA and FB of photosystem I (PSI); essential for photochemical activity. FB is the terminal electron acceptor of PSI, donating electrons to ferredoxin. The C-terminus interacts with PsaA/B/D and helps assemble the protein into the PSI complex. Required for binding of PsaD and PsaE to PSI. PSI is a plastocyanin/cytochrome c6-ferredoxin oxidoreductase, converting photonic excitation into a charge separation, which transfers an electron from the donor P700 chlorophyll pair to the spectroscopically characterized acceptors A0, A1, FX, FA and FB in turn.</text>
</comment>
<comment type="catalytic activity">
    <reaction evidence="2">
        <text>reduced [plastocyanin] + hnu + oxidized [2Fe-2S]-[ferredoxin] = oxidized [plastocyanin] + reduced [2Fe-2S]-[ferredoxin]</text>
        <dbReference type="Rhea" id="RHEA:30407"/>
        <dbReference type="Rhea" id="RHEA-COMP:10000"/>
        <dbReference type="Rhea" id="RHEA-COMP:10001"/>
        <dbReference type="Rhea" id="RHEA-COMP:10039"/>
        <dbReference type="Rhea" id="RHEA-COMP:10040"/>
        <dbReference type="ChEBI" id="CHEBI:29036"/>
        <dbReference type="ChEBI" id="CHEBI:30212"/>
        <dbReference type="ChEBI" id="CHEBI:33737"/>
        <dbReference type="ChEBI" id="CHEBI:33738"/>
        <dbReference type="ChEBI" id="CHEBI:49552"/>
        <dbReference type="EC" id="1.97.1.12"/>
    </reaction>
</comment>
<comment type="cofactor">
    <cofactor evidence="2">
        <name>[4Fe-4S] cluster</name>
        <dbReference type="ChEBI" id="CHEBI:49883"/>
    </cofactor>
    <text evidence="2">Binds 2 [4Fe-4S] clusters. Cluster 2 is most probably the spectroscopically characterized electron acceptor FA and cluster 1 is most probably FB.</text>
</comment>
<comment type="subunit">
    <text evidence="2">The eukaryotic PSI reaction center is composed of at least 11 subunits.</text>
</comment>
<comment type="subcellular location">
    <subcellularLocation>
        <location evidence="2">Plastid</location>
        <location evidence="2">Chloroplast thylakoid membrane</location>
        <topology evidence="2">Peripheral membrane protein</topology>
        <orientation evidence="2">Stromal side</orientation>
    </subcellularLocation>
</comment>
<dbReference type="EC" id="1.97.1.12" evidence="2"/>
<dbReference type="EMBL" id="AB002583">
    <property type="protein sequence ID" value="BAC76144.1"/>
    <property type="molecule type" value="Genomic_DNA"/>
</dbReference>
<dbReference type="RefSeq" id="NP_848982.1">
    <property type="nucleotide sequence ID" value="NC_004799.1"/>
</dbReference>
<dbReference type="PDB" id="5ZGB">
    <property type="method" value="EM"/>
    <property type="resolution" value="3.63 A"/>
    <property type="chains" value="C=1-81"/>
</dbReference>
<dbReference type="PDB" id="5ZGH">
    <property type="method" value="EM"/>
    <property type="resolution" value="3.82 A"/>
    <property type="chains" value="C=1-81"/>
</dbReference>
<dbReference type="PDB" id="6FOS">
    <property type="method" value="X-ray"/>
    <property type="resolution" value="4.00 A"/>
    <property type="chains" value="C=2-81"/>
</dbReference>
<dbReference type="PDB" id="7BLZ">
    <property type="method" value="EM"/>
    <property type="resolution" value="3.10 A"/>
    <property type="chains" value="C=2-81"/>
</dbReference>
<dbReference type="PDBsum" id="5ZGB"/>
<dbReference type="PDBsum" id="5ZGH"/>
<dbReference type="PDBsum" id="6FOS"/>
<dbReference type="PDBsum" id="7BLZ"/>
<dbReference type="EMDB" id="EMD-12228"/>
<dbReference type="EMDB" id="EMD-6929"/>
<dbReference type="SMR" id="Q85G47"/>
<dbReference type="STRING" id="280699.Q85G47"/>
<dbReference type="EnsemblPlants" id="CMV059CT">
    <property type="protein sequence ID" value="CMV059CT"/>
    <property type="gene ID" value="CMV059C"/>
</dbReference>
<dbReference type="GeneID" id="844937"/>
<dbReference type="Gramene" id="CMV059CT">
    <property type="protein sequence ID" value="CMV059CT"/>
    <property type="gene ID" value="CMV059C"/>
</dbReference>
<dbReference type="KEGG" id="cme:CymeCp050"/>
<dbReference type="eggNOG" id="ENOG502S26M">
    <property type="taxonomic scope" value="Eukaryota"/>
</dbReference>
<dbReference type="HOGENOM" id="CLU_139698_8_0_1"/>
<dbReference type="Proteomes" id="UP000007014">
    <property type="component" value="Chloroplast"/>
</dbReference>
<dbReference type="GO" id="GO:0009535">
    <property type="term" value="C:chloroplast thylakoid membrane"/>
    <property type="evidence" value="ECO:0007669"/>
    <property type="project" value="UniProtKB-SubCell"/>
</dbReference>
<dbReference type="GO" id="GO:0009522">
    <property type="term" value="C:photosystem I"/>
    <property type="evidence" value="ECO:0007669"/>
    <property type="project" value="UniProtKB-KW"/>
</dbReference>
<dbReference type="GO" id="GO:0051539">
    <property type="term" value="F:4 iron, 4 sulfur cluster binding"/>
    <property type="evidence" value="ECO:0007669"/>
    <property type="project" value="UniProtKB-KW"/>
</dbReference>
<dbReference type="GO" id="GO:0009055">
    <property type="term" value="F:electron transfer activity"/>
    <property type="evidence" value="ECO:0007669"/>
    <property type="project" value="UniProtKB-UniRule"/>
</dbReference>
<dbReference type="GO" id="GO:0046872">
    <property type="term" value="F:metal ion binding"/>
    <property type="evidence" value="ECO:0007669"/>
    <property type="project" value="UniProtKB-KW"/>
</dbReference>
<dbReference type="GO" id="GO:0016491">
    <property type="term" value="F:oxidoreductase activity"/>
    <property type="evidence" value="ECO:0007669"/>
    <property type="project" value="UniProtKB-KW"/>
</dbReference>
<dbReference type="GO" id="GO:0009773">
    <property type="term" value="P:photosynthetic electron transport in photosystem I"/>
    <property type="evidence" value="ECO:0007669"/>
    <property type="project" value="InterPro"/>
</dbReference>
<dbReference type="FunFam" id="3.30.70.20:FF:000001">
    <property type="entry name" value="Photosystem I iron-sulfur center"/>
    <property type="match status" value="1"/>
</dbReference>
<dbReference type="Gene3D" id="3.30.70.20">
    <property type="match status" value="1"/>
</dbReference>
<dbReference type="HAMAP" id="MF_01303">
    <property type="entry name" value="PSI_PsaC"/>
    <property type="match status" value="1"/>
</dbReference>
<dbReference type="InterPro" id="IPR017896">
    <property type="entry name" value="4Fe4S_Fe-S-bd"/>
</dbReference>
<dbReference type="InterPro" id="IPR017900">
    <property type="entry name" value="4Fe4S_Fe_S_CS"/>
</dbReference>
<dbReference type="InterPro" id="IPR050157">
    <property type="entry name" value="PSI_iron-sulfur_center"/>
</dbReference>
<dbReference type="InterPro" id="IPR017491">
    <property type="entry name" value="PSI_PsaC"/>
</dbReference>
<dbReference type="NCBIfam" id="TIGR03048">
    <property type="entry name" value="PS_I_psaC"/>
    <property type="match status" value="1"/>
</dbReference>
<dbReference type="PANTHER" id="PTHR24960:SF79">
    <property type="entry name" value="PHOTOSYSTEM I IRON-SULFUR CENTER"/>
    <property type="match status" value="1"/>
</dbReference>
<dbReference type="PANTHER" id="PTHR24960">
    <property type="entry name" value="PHOTOSYSTEM I IRON-SULFUR CENTER-RELATED"/>
    <property type="match status" value="1"/>
</dbReference>
<dbReference type="Pfam" id="PF12838">
    <property type="entry name" value="Fer4_7"/>
    <property type="match status" value="1"/>
</dbReference>
<dbReference type="SUPFAM" id="SSF54862">
    <property type="entry name" value="4Fe-4S ferredoxins"/>
    <property type="match status" value="1"/>
</dbReference>
<dbReference type="PROSITE" id="PS00198">
    <property type="entry name" value="4FE4S_FER_1"/>
    <property type="match status" value="2"/>
</dbReference>
<dbReference type="PROSITE" id="PS51379">
    <property type="entry name" value="4FE4S_FER_2"/>
    <property type="match status" value="2"/>
</dbReference>
<accession>Q85G47</accession>
<reference key="1">
    <citation type="journal article" date="2003" name="DNA Res.">
        <title>Complete sequence and analysis of the plastid genome of the unicellular red alga Cyanidioschyzon merolae.</title>
        <authorList>
            <person name="Ohta N."/>
            <person name="Matsuzaki M."/>
            <person name="Misumi O."/>
            <person name="Miyagishima S.-Y."/>
            <person name="Nozaki H."/>
            <person name="Tanaka K."/>
            <person name="Shin-i T."/>
            <person name="Kohara Y."/>
            <person name="Kuroiwa T."/>
        </authorList>
    </citation>
    <scope>NUCLEOTIDE SEQUENCE [LARGE SCALE GENOMIC DNA]</scope>
    <source>
        <strain>NIES-3377 / 10D</strain>
    </source>
</reference>